<protein>
    <recommendedName>
        <fullName evidence="1">Cysteine--tRNA ligase</fullName>
        <ecNumber evidence="1">6.1.1.16</ecNumber>
    </recommendedName>
    <alternativeName>
        <fullName evidence="1">Cysteinyl-tRNA synthetase</fullName>
        <shortName evidence="1">CysRS</shortName>
    </alternativeName>
</protein>
<sequence>MLKIFNTLTRQKEEFKPIHAGEVGMYVCGITVYDLCHIGHGRTFVAFDVVARYLRFLGYKLKYVRNITDIDDKIIKRANENGESFVALVDRMIAEMHQDFDALNILRPDSEPRATHHIQEIIELTRTLIEKGHAYVADNGDVMFDVPTDPTYGQLSRQDLEQLQAGARVDVVDVKRNPMDFVLWKMSKEGEPSWPSPWGEGRPGWHIECSAMNCKQLGNHFDIHGGGSDLMFPHHENEIAQSTCAHDGEYVNYWMHSGMVMVDREKMSKSLGNFFTVRDVLKYYDAETVRYFLMSGHYRSQLNYSEENLKQARASLERLYTALRGTDKSAAPAGGEAFEARFVEAMNDDFNTPEAYSVLFDMAREVNRLKGEDMTAANAMASHLRKISGVLGLLEQEPDVFLQSGAQADDGEVAEIEALIQQRLDARKAKDWAAADAARDRLAEMGIILEDGPQGTTWRRK</sequence>
<gene>
    <name evidence="1" type="primary">cysS</name>
    <name type="ordered locus">SEN0518</name>
</gene>
<feature type="chain" id="PRO_1000090867" description="Cysteine--tRNA ligase">
    <location>
        <begin position="1"/>
        <end position="461"/>
    </location>
</feature>
<feature type="short sequence motif" description="'HIGH' region">
    <location>
        <begin position="30"/>
        <end position="40"/>
    </location>
</feature>
<feature type="short sequence motif" description="'KMSKS' region">
    <location>
        <begin position="266"/>
        <end position="270"/>
    </location>
</feature>
<feature type="binding site" evidence="1">
    <location>
        <position position="28"/>
    </location>
    <ligand>
        <name>Zn(2+)</name>
        <dbReference type="ChEBI" id="CHEBI:29105"/>
    </ligand>
</feature>
<feature type="binding site" evidence="1">
    <location>
        <position position="209"/>
    </location>
    <ligand>
        <name>Zn(2+)</name>
        <dbReference type="ChEBI" id="CHEBI:29105"/>
    </ligand>
</feature>
<feature type="binding site" evidence="1">
    <location>
        <position position="234"/>
    </location>
    <ligand>
        <name>Zn(2+)</name>
        <dbReference type="ChEBI" id="CHEBI:29105"/>
    </ligand>
</feature>
<feature type="binding site" evidence="1">
    <location>
        <position position="238"/>
    </location>
    <ligand>
        <name>Zn(2+)</name>
        <dbReference type="ChEBI" id="CHEBI:29105"/>
    </ligand>
</feature>
<feature type="binding site" evidence="1">
    <location>
        <position position="269"/>
    </location>
    <ligand>
        <name>ATP</name>
        <dbReference type="ChEBI" id="CHEBI:30616"/>
    </ligand>
</feature>
<reference key="1">
    <citation type="journal article" date="2008" name="Genome Res.">
        <title>Comparative genome analysis of Salmonella enteritidis PT4 and Salmonella gallinarum 287/91 provides insights into evolutionary and host adaptation pathways.</title>
        <authorList>
            <person name="Thomson N.R."/>
            <person name="Clayton D.J."/>
            <person name="Windhorst D."/>
            <person name="Vernikos G."/>
            <person name="Davidson S."/>
            <person name="Churcher C."/>
            <person name="Quail M.A."/>
            <person name="Stevens M."/>
            <person name="Jones M.A."/>
            <person name="Watson M."/>
            <person name="Barron A."/>
            <person name="Layton A."/>
            <person name="Pickard D."/>
            <person name="Kingsley R.A."/>
            <person name="Bignell A."/>
            <person name="Clark L."/>
            <person name="Harris B."/>
            <person name="Ormond D."/>
            <person name="Abdellah Z."/>
            <person name="Brooks K."/>
            <person name="Cherevach I."/>
            <person name="Chillingworth T."/>
            <person name="Woodward J."/>
            <person name="Norberczak H."/>
            <person name="Lord A."/>
            <person name="Arrowsmith C."/>
            <person name="Jagels K."/>
            <person name="Moule S."/>
            <person name="Mungall K."/>
            <person name="Saunders M."/>
            <person name="Whitehead S."/>
            <person name="Chabalgoity J.A."/>
            <person name="Maskell D."/>
            <person name="Humphreys T."/>
            <person name="Roberts M."/>
            <person name="Barrow P.A."/>
            <person name="Dougan G."/>
            <person name="Parkhill J."/>
        </authorList>
    </citation>
    <scope>NUCLEOTIDE SEQUENCE [LARGE SCALE GENOMIC DNA]</scope>
    <source>
        <strain>P125109</strain>
    </source>
</reference>
<evidence type="ECO:0000255" key="1">
    <source>
        <dbReference type="HAMAP-Rule" id="MF_00041"/>
    </source>
</evidence>
<accession>B5QUV0</accession>
<keyword id="KW-0030">Aminoacyl-tRNA synthetase</keyword>
<keyword id="KW-0067">ATP-binding</keyword>
<keyword id="KW-0963">Cytoplasm</keyword>
<keyword id="KW-0436">Ligase</keyword>
<keyword id="KW-0479">Metal-binding</keyword>
<keyword id="KW-0547">Nucleotide-binding</keyword>
<keyword id="KW-0648">Protein biosynthesis</keyword>
<keyword id="KW-0862">Zinc</keyword>
<proteinExistence type="inferred from homology"/>
<name>SYC_SALEP</name>
<dbReference type="EC" id="6.1.1.16" evidence="1"/>
<dbReference type="EMBL" id="AM933172">
    <property type="protein sequence ID" value="CAR32103.1"/>
    <property type="molecule type" value="Genomic_DNA"/>
</dbReference>
<dbReference type="RefSeq" id="WP_000912376.1">
    <property type="nucleotide sequence ID" value="NC_011294.1"/>
</dbReference>
<dbReference type="SMR" id="B5QUV0"/>
<dbReference type="KEGG" id="set:SEN0518"/>
<dbReference type="HOGENOM" id="CLU_013528_0_1_6"/>
<dbReference type="Proteomes" id="UP000000613">
    <property type="component" value="Chromosome"/>
</dbReference>
<dbReference type="GO" id="GO:0005829">
    <property type="term" value="C:cytosol"/>
    <property type="evidence" value="ECO:0007669"/>
    <property type="project" value="TreeGrafter"/>
</dbReference>
<dbReference type="GO" id="GO:0005524">
    <property type="term" value="F:ATP binding"/>
    <property type="evidence" value="ECO:0007669"/>
    <property type="project" value="UniProtKB-UniRule"/>
</dbReference>
<dbReference type="GO" id="GO:0004817">
    <property type="term" value="F:cysteine-tRNA ligase activity"/>
    <property type="evidence" value="ECO:0007669"/>
    <property type="project" value="UniProtKB-UniRule"/>
</dbReference>
<dbReference type="GO" id="GO:0008270">
    <property type="term" value="F:zinc ion binding"/>
    <property type="evidence" value="ECO:0007669"/>
    <property type="project" value="UniProtKB-UniRule"/>
</dbReference>
<dbReference type="GO" id="GO:0006423">
    <property type="term" value="P:cysteinyl-tRNA aminoacylation"/>
    <property type="evidence" value="ECO:0007669"/>
    <property type="project" value="UniProtKB-UniRule"/>
</dbReference>
<dbReference type="CDD" id="cd07963">
    <property type="entry name" value="Anticodon_Ia_Cys"/>
    <property type="match status" value="1"/>
</dbReference>
<dbReference type="CDD" id="cd00672">
    <property type="entry name" value="CysRS_core"/>
    <property type="match status" value="1"/>
</dbReference>
<dbReference type="FunFam" id="1.20.120.1910:FF:000001">
    <property type="entry name" value="Cysteine--tRNA ligase"/>
    <property type="match status" value="1"/>
</dbReference>
<dbReference type="FunFam" id="3.40.50.620:FF:000009">
    <property type="entry name" value="Cysteine--tRNA ligase"/>
    <property type="match status" value="1"/>
</dbReference>
<dbReference type="Gene3D" id="1.20.120.1910">
    <property type="entry name" value="Cysteine-tRNA ligase, C-terminal anti-codon recognition domain"/>
    <property type="match status" value="1"/>
</dbReference>
<dbReference type="Gene3D" id="3.40.50.620">
    <property type="entry name" value="HUPs"/>
    <property type="match status" value="1"/>
</dbReference>
<dbReference type="HAMAP" id="MF_00041">
    <property type="entry name" value="Cys_tRNA_synth"/>
    <property type="match status" value="1"/>
</dbReference>
<dbReference type="InterPro" id="IPR015803">
    <property type="entry name" value="Cys-tRNA-ligase"/>
</dbReference>
<dbReference type="InterPro" id="IPR015273">
    <property type="entry name" value="Cys-tRNA-synt_Ia_DALR"/>
</dbReference>
<dbReference type="InterPro" id="IPR024909">
    <property type="entry name" value="Cys-tRNA/MSH_ligase"/>
</dbReference>
<dbReference type="InterPro" id="IPR056411">
    <property type="entry name" value="CysS_C"/>
</dbReference>
<dbReference type="InterPro" id="IPR014729">
    <property type="entry name" value="Rossmann-like_a/b/a_fold"/>
</dbReference>
<dbReference type="InterPro" id="IPR032678">
    <property type="entry name" value="tRNA-synt_1_cat_dom"/>
</dbReference>
<dbReference type="InterPro" id="IPR009080">
    <property type="entry name" value="tRNAsynth_Ia_anticodon-bd"/>
</dbReference>
<dbReference type="NCBIfam" id="TIGR00435">
    <property type="entry name" value="cysS"/>
    <property type="match status" value="1"/>
</dbReference>
<dbReference type="PANTHER" id="PTHR10890:SF3">
    <property type="entry name" value="CYSTEINE--TRNA LIGASE, CYTOPLASMIC"/>
    <property type="match status" value="1"/>
</dbReference>
<dbReference type="PANTHER" id="PTHR10890">
    <property type="entry name" value="CYSTEINYL-TRNA SYNTHETASE"/>
    <property type="match status" value="1"/>
</dbReference>
<dbReference type="Pfam" id="PF23493">
    <property type="entry name" value="CysS_C"/>
    <property type="match status" value="1"/>
</dbReference>
<dbReference type="Pfam" id="PF09190">
    <property type="entry name" value="DALR_2"/>
    <property type="match status" value="1"/>
</dbReference>
<dbReference type="Pfam" id="PF01406">
    <property type="entry name" value="tRNA-synt_1e"/>
    <property type="match status" value="1"/>
</dbReference>
<dbReference type="PRINTS" id="PR00983">
    <property type="entry name" value="TRNASYNTHCYS"/>
</dbReference>
<dbReference type="SMART" id="SM00840">
    <property type="entry name" value="DALR_2"/>
    <property type="match status" value="1"/>
</dbReference>
<dbReference type="SUPFAM" id="SSF47323">
    <property type="entry name" value="Anticodon-binding domain of a subclass of class I aminoacyl-tRNA synthetases"/>
    <property type="match status" value="1"/>
</dbReference>
<dbReference type="SUPFAM" id="SSF52374">
    <property type="entry name" value="Nucleotidylyl transferase"/>
    <property type="match status" value="1"/>
</dbReference>
<comment type="catalytic activity">
    <reaction evidence="1">
        <text>tRNA(Cys) + L-cysteine + ATP = L-cysteinyl-tRNA(Cys) + AMP + diphosphate</text>
        <dbReference type="Rhea" id="RHEA:17773"/>
        <dbReference type="Rhea" id="RHEA-COMP:9661"/>
        <dbReference type="Rhea" id="RHEA-COMP:9679"/>
        <dbReference type="ChEBI" id="CHEBI:30616"/>
        <dbReference type="ChEBI" id="CHEBI:33019"/>
        <dbReference type="ChEBI" id="CHEBI:35235"/>
        <dbReference type="ChEBI" id="CHEBI:78442"/>
        <dbReference type="ChEBI" id="CHEBI:78517"/>
        <dbReference type="ChEBI" id="CHEBI:456215"/>
        <dbReference type="EC" id="6.1.1.16"/>
    </reaction>
</comment>
<comment type="cofactor">
    <cofactor evidence="1">
        <name>Zn(2+)</name>
        <dbReference type="ChEBI" id="CHEBI:29105"/>
    </cofactor>
    <text evidence="1">Binds 1 zinc ion per subunit.</text>
</comment>
<comment type="subunit">
    <text evidence="1">Monomer.</text>
</comment>
<comment type="subcellular location">
    <subcellularLocation>
        <location evidence="1">Cytoplasm</location>
    </subcellularLocation>
</comment>
<comment type="similarity">
    <text evidence="1">Belongs to the class-I aminoacyl-tRNA synthetase family.</text>
</comment>
<organism>
    <name type="scientific">Salmonella enteritidis PT4 (strain P125109)</name>
    <dbReference type="NCBI Taxonomy" id="550537"/>
    <lineage>
        <taxon>Bacteria</taxon>
        <taxon>Pseudomonadati</taxon>
        <taxon>Pseudomonadota</taxon>
        <taxon>Gammaproteobacteria</taxon>
        <taxon>Enterobacterales</taxon>
        <taxon>Enterobacteriaceae</taxon>
        <taxon>Salmonella</taxon>
    </lineage>
</organism>